<keyword id="KW-0963">Cytoplasm</keyword>
<keyword id="KW-0227">DNA damage</keyword>
<keyword id="KW-0233">DNA recombination</keyword>
<keyword id="KW-0234">DNA repair</keyword>
<keyword id="KW-0238">DNA-binding</keyword>
<keyword id="KW-0255">Endonuclease</keyword>
<keyword id="KW-0378">Hydrolase</keyword>
<keyword id="KW-0460">Magnesium</keyword>
<keyword id="KW-0479">Metal-binding</keyword>
<keyword id="KW-0540">Nuclease</keyword>
<dbReference type="EC" id="3.1.21.10" evidence="1"/>
<dbReference type="EMBL" id="CP000967">
    <property type="protein sequence ID" value="ACD59833.1"/>
    <property type="molecule type" value="Genomic_DNA"/>
</dbReference>
<dbReference type="RefSeq" id="WP_012445354.1">
    <property type="nucleotide sequence ID" value="NC_010717.2"/>
</dbReference>
<dbReference type="SMR" id="B2STK3"/>
<dbReference type="KEGG" id="xop:PXO_01556"/>
<dbReference type="eggNOG" id="COG0817">
    <property type="taxonomic scope" value="Bacteria"/>
</dbReference>
<dbReference type="HOGENOM" id="CLU_091257_2_1_6"/>
<dbReference type="Proteomes" id="UP000001740">
    <property type="component" value="Chromosome"/>
</dbReference>
<dbReference type="GO" id="GO:0005737">
    <property type="term" value="C:cytoplasm"/>
    <property type="evidence" value="ECO:0007669"/>
    <property type="project" value="UniProtKB-SubCell"/>
</dbReference>
<dbReference type="GO" id="GO:0048476">
    <property type="term" value="C:Holliday junction resolvase complex"/>
    <property type="evidence" value="ECO:0007669"/>
    <property type="project" value="UniProtKB-UniRule"/>
</dbReference>
<dbReference type="GO" id="GO:0008821">
    <property type="term" value="F:crossover junction DNA endonuclease activity"/>
    <property type="evidence" value="ECO:0007669"/>
    <property type="project" value="UniProtKB-UniRule"/>
</dbReference>
<dbReference type="GO" id="GO:0003677">
    <property type="term" value="F:DNA binding"/>
    <property type="evidence" value="ECO:0007669"/>
    <property type="project" value="UniProtKB-KW"/>
</dbReference>
<dbReference type="GO" id="GO:0000287">
    <property type="term" value="F:magnesium ion binding"/>
    <property type="evidence" value="ECO:0007669"/>
    <property type="project" value="UniProtKB-UniRule"/>
</dbReference>
<dbReference type="GO" id="GO:0006310">
    <property type="term" value="P:DNA recombination"/>
    <property type="evidence" value="ECO:0007669"/>
    <property type="project" value="UniProtKB-UniRule"/>
</dbReference>
<dbReference type="GO" id="GO:0006281">
    <property type="term" value="P:DNA repair"/>
    <property type="evidence" value="ECO:0007669"/>
    <property type="project" value="UniProtKB-UniRule"/>
</dbReference>
<dbReference type="CDD" id="cd16962">
    <property type="entry name" value="RuvC"/>
    <property type="match status" value="1"/>
</dbReference>
<dbReference type="FunFam" id="3.30.420.10:FF:000002">
    <property type="entry name" value="Crossover junction endodeoxyribonuclease RuvC"/>
    <property type="match status" value="1"/>
</dbReference>
<dbReference type="Gene3D" id="3.30.420.10">
    <property type="entry name" value="Ribonuclease H-like superfamily/Ribonuclease H"/>
    <property type="match status" value="1"/>
</dbReference>
<dbReference type="HAMAP" id="MF_00034">
    <property type="entry name" value="RuvC"/>
    <property type="match status" value="1"/>
</dbReference>
<dbReference type="InterPro" id="IPR012337">
    <property type="entry name" value="RNaseH-like_sf"/>
</dbReference>
<dbReference type="InterPro" id="IPR036397">
    <property type="entry name" value="RNaseH_sf"/>
</dbReference>
<dbReference type="InterPro" id="IPR020563">
    <property type="entry name" value="X-over_junc_endoDNase_Mg_BS"/>
</dbReference>
<dbReference type="InterPro" id="IPR002176">
    <property type="entry name" value="X-over_junc_endoDNase_RuvC"/>
</dbReference>
<dbReference type="NCBIfam" id="TIGR00228">
    <property type="entry name" value="ruvC"/>
    <property type="match status" value="1"/>
</dbReference>
<dbReference type="PANTHER" id="PTHR30194">
    <property type="entry name" value="CROSSOVER JUNCTION ENDODEOXYRIBONUCLEASE RUVC"/>
    <property type="match status" value="1"/>
</dbReference>
<dbReference type="PANTHER" id="PTHR30194:SF3">
    <property type="entry name" value="CROSSOVER JUNCTION ENDODEOXYRIBONUCLEASE RUVC"/>
    <property type="match status" value="1"/>
</dbReference>
<dbReference type="Pfam" id="PF02075">
    <property type="entry name" value="RuvC"/>
    <property type="match status" value="1"/>
</dbReference>
<dbReference type="PRINTS" id="PR00696">
    <property type="entry name" value="RSOLVASERUVC"/>
</dbReference>
<dbReference type="SUPFAM" id="SSF53098">
    <property type="entry name" value="Ribonuclease H-like"/>
    <property type="match status" value="1"/>
</dbReference>
<dbReference type="PROSITE" id="PS01321">
    <property type="entry name" value="RUVC"/>
    <property type="match status" value="1"/>
</dbReference>
<gene>
    <name evidence="1" type="primary">ruvC</name>
    <name type="ordered locus">PXO_01556</name>
</gene>
<comment type="function">
    <text evidence="1">The RuvA-RuvB-RuvC complex processes Holliday junction (HJ) DNA during genetic recombination and DNA repair. Endonuclease that resolves HJ intermediates. Cleaves cruciform DNA by making single-stranded nicks across the HJ at symmetrical positions within the homologous arms, yielding a 5'-phosphate and a 3'-hydroxyl group; requires a central core of homology in the junction. The consensus cleavage sequence is 5'-(A/T)TT(C/G)-3'. Cleavage occurs on the 3'-side of the TT dinucleotide at the point of strand exchange. HJ branch migration catalyzed by RuvA-RuvB allows RuvC to scan DNA until it finds its consensus sequence, where it cleaves and resolves the cruciform DNA.</text>
</comment>
<comment type="catalytic activity">
    <reaction evidence="1">
        <text>Endonucleolytic cleavage at a junction such as a reciprocal single-stranded crossover between two homologous DNA duplexes (Holliday junction).</text>
        <dbReference type="EC" id="3.1.21.10"/>
    </reaction>
</comment>
<comment type="cofactor">
    <cofactor evidence="1">
        <name>Mg(2+)</name>
        <dbReference type="ChEBI" id="CHEBI:18420"/>
    </cofactor>
    <text evidence="1">Binds 2 Mg(2+) ion per subunit.</text>
</comment>
<comment type="subunit">
    <text evidence="1">Homodimer which binds Holliday junction (HJ) DNA. The HJ becomes 2-fold symmetrical on binding to RuvC with unstacked arms; it has a different conformation from HJ DNA in complex with RuvA. In the full resolvosome a probable DNA-RuvA(4)-RuvB(12)-RuvC(2) complex forms which resolves the HJ.</text>
</comment>
<comment type="subcellular location">
    <subcellularLocation>
        <location evidence="1">Cytoplasm</location>
    </subcellularLocation>
</comment>
<comment type="similarity">
    <text evidence="1">Belongs to the RuvC family.</text>
</comment>
<feature type="chain" id="PRO_1000090575" description="Crossover junction endodeoxyribonuclease RuvC">
    <location>
        <begin position="1"/>
        <end position="174"/>
    </location>
</feature>
<feature type="active site" evidence="1">
    <location>
        <position position="8"/>
    </location>
</feature>
<feature type="active site" evidence="1">
    <location>
        <position position="69"/>
    </location>
</feature>
<feature type="active site" evidence="1">
    <location>
        <position position="141"/>
    </location>
</feature>
<feature type="binding site" evidence="1">
    <location>
        <position position="8"/>
    </location>
    <ligand>
        <name>Mg(2+)</name>
        <dbReference type="ChEBI" id="CHEBI:18420"/>
        <label>1</label>
    </ligand>
</feature>
<feature type="binding site" evidence="1">
    <location>
        <position position="69"/>
    </location>
    <ligand>
        <name>Mg(2+)</name>
        <dbReference type="ChEBI" id="CHEBI:18420"/>
        <label>2</label>
    </ligand>
</feature>
<feature type="binding site" evidence="1">
    <location>
        <position position="141"/>
    </location>
    <ligand>
        <name>Mg(2+)</name>
        <dbReference type="ChEBI" id="CHEBI:18420"/>
        <label>1</label>
    </ligand>
</feature>
<sequence>MTRILGIDPGSQRTGIGIIDIDEGGRSRHVHHAPLILLGEGDFSQRLKRLLHGLGELIETYRPDEVAIEKVFMGKSAASALKLGHARGAAICAVVMRDLPVHEYAATEVKLALVGKGGADKVQVQHMVGIMLNLKGKLQPDAADALAVAITHAHVRATAQCLGVNTQQAWSRKK</sequence>
<proteinExistence type="inferred from homology"/>
<evidence type="ECO:0000255" key="1">
    <source>
        <dbReference type="HAMAP-Rule" id="MF_00034"/>
    </source>
</evidence>
<organism>
    <name type="scientific">Xanthomonas oryzae pv. oryzae (strain PXO99A)</name>
    <dbReference type="NCBI Taxonomy" id="360094"/>
    <lineage>
        <taxon>Bacteria</taxon>
        <taxon>Pseudomonadati</taxon>
        <taxon>Pseudomonadota</taxon>
        <taxon>Gammaproteobacteria</taxon>
        <taxon>Lysobacterales</taxon>
        <taxon>Lysobacteraceae</taxon>
        <taxon>Xanthomonas</taxon>
    </lineage>
</organism>
<name>RUVC_XANOP</name>
<reference key="1">
    <citation type="journal article" date="2008" name="BMC Genomics">
        <title>Genome sequence and rapid evolution of the rice pathogen Xanthomonas oryzae pv. oryzae PXO99A.</title>
        <authorList>
            <person name="Salzberg S.L."/>
            <person name="Sommer D.D."/>
            <person name="Schatz M.C."/>
            <person name="Phillippy A.M."/>
            <person name="Rabinowicz P.D."/>
            <person name="Tsuge S."/>
            <person name="Furutani A."/>
            <person name="Ochiai H."/>
            <person name="Delcher A.L."/>
            <person name="Kelley D."/>
            <person name="Madupu R."/>
            <person name="Puiu D."/>
            <person name="Radune D."/>
            <person name="Shumway M."/>
            <person name="Trapnell C."/>
            <person name="Aparna G."/>
            <person name="Jha G."/>
            <person name="Pandey A."/>
            <person name="Patil P.B."/>
            <person name="Ishihara H."/>
            <person name="Meyer D.F."/>
            <person name="Szurek B."/>
            <person name="Verdier V."/>
            <person name="Koebnik R."/>
            <person name="Dow J.M."/>
            <person name="Ryan R.P."/>
            <person name="Hirata H."/>
            <person name="Tsuyumu S."/>
            <person name="Won Lee S."/>
            <person name="Seo Y.-S."/>
            <person name="Sriariyanum M."/>
            <person name="Ronald P.C."/>
            <person name="Sonti R.V."/>
            <person name="Van Sluys M.-A."/>
            <person name="Leach J.E."/>
            <person name="White F.F."/>
            <person name="Bogdanove A.J."/>
        </authorList>
    </citation>
    <scope>NUCLEOTIDE SEQUENCE [LARGE SCALE GENOMIC DNA]</scope>
    <source>
        <strain>PXO99A</strain>
    </source>
</reference>
<accession>B2STK3</accession>
<protein>
    <recommendedName>
        <fullName evidence="1">Crossover junction endodeoxyribonuclease RuvC</fullName>
        <ecNumber evidence="1">3.1.21.10</ecNumber>
    </recommendedName>
    <alternativeName>
        <fullName evidence="1">Holliday junction nuclease RuvC</fullName>
    </alternativeName>
    <alternativeName>
        <fullName evidence="1">Holliday junction resolvase RuvC</fullName>
    </alternativeName>
</protein>